<proteinExistence type="evidence at protein level"/>
<reference key="1">
    <citation type="journal article" date="1998" name="Nature">
        <title>Deciphering the biology of Mycobacterium tuberculosis from the complete genome sequence.</title>
        <authorList>
            <person name="Cole S.T."/>
            <person name="Brosch R."/>
            <person name="Parkhill J."/>
            <person name="Garnier T."/>
            <person name="Churcher C.M."/>
            <person name="Harris D.E."/>
            <person name="Gordon S.V."/>
            <person name="Eiglmeier K."/>
            <person name="Gas S."/>
            <person name="Barry C.E. III"/>
            <person name="Tekaia F."/>
            <person name="Badcock K."/>
            <person name="Basham D."/>
            <person name="Brown D."/>
            <person name="Chillingworth T."/>
            <person name="Connor R."/>
            <person name="Davies R.M."/>
            <person name="Devlin K."/>
            <person name="Feltwell T."/>
            <person name="Gentles S."/>
            <person name="Hamlin N."/>
            <person name="Holroyd S."/>
            <person name="Hornsby T."/>
            <person name="Jagels K."/>
            <person name="Krogh A."/>
            <person name="McLean J."/>
            <person name="Moule S."/>
            <person name="Murphy L.D."/>
            <person name="Oliver S."/>
            <person name="Osborne J."/>
            <person name="Quail M.A."/>
            <person name="Rajandream M.A."/>
            <person name="Rogers J."/>
            <person name="Rutter S."/>
            <person name="Seeger K."/>
            <person name="Skelton S."/>
            <person name="Squares S."/>
            <person name="Squares R."/>
            <person name="Sulston J.E."/>
            <person name="Taylor K."/>
            <person name="Whitehead S."/>
            <person name="Barrell B.G."/>
        </authorList>
    </citation>
    <scope>NUCLEOTIDE SEQUENCE [LARGE SCALE GENOMIC DNA]</scope>
    <source>
        <strain>ATCC 25618 / H37Rv</strain>
    </source>
</reference>
<reference key="2">
    <citation type="journal article" date="2009" name="FASEB J.">
        <title>Cutinase-like proteins of Mycobacterium tuberculosis: characterization of their variable enzymatic functions and active site identification.</title>
        <authorList>
            <person name="West N.P."/>
            <person name="Chow F.M."/>
            <person name="Randall E.J."/>
            <person name="Wu J."/>
            <person name="Chen J."/>
            <person name="Ribeiro J.M."/>
            <person name="Britton W.J."/>
        </authorList>
    </citation>
    <scope>FUNCTION</scope>
    <source>
        <strain>H37Rv</strain>
    </source>
</reference>
<reference key="3">
    <citation type="journal article" date="2011" name="Mol. Cell. Proteomics">
        <title>Proteogenomic analysis of Mycobacterium tuberculosis by high resolution mass spectrometry.</title>
        <authorList>
            <person name="Kelkar D.S."/>
            <person name="Kumar D."/>
            <person name="Kumar P."/>
            <person name="Balakrishnan L."/>
            <person name="Muthusamy B."/>
            <person name="Yadav A.K."/>
            <person name="Shrivastava P."/>
            <person name="Marimuthu A."/>
            <person name="Anand S."/>
            <person name="Sundaram H."/>
            <person name="Kingsbury R."/>
            <person name="Harsha H.C."/>
            <person name="Nair B."/>
            <person name="Prasad T.S."/>
            <person name="Chauhan D.S."/>
            <person name="Katoch K."/>
            <person name="Katoch V.M."/>
            <person name="Kumar P."/>
            <person name="Chaerkady R."/>
            <person name="Ramachandran S."/>
            <person name="Dash D."/>
            <person name="Pandey A."/>
        </authorList>
    </citation>
    <scope>IDENTIFICATION BY MASS SPECTROMETRY [LARGE SCALE ANALYSIS]</scope>
    <source>
        <strain>ATCC 25618 / H37Rv</strain>
    </source>
</reference>
<name>CULP3_MYCTU</name>
<keyword id="KW-1015">Disulfide bond</keyword>
<keyword id="KW-0378">Hydrolase</keyword>
<keyword id="KW-1185">Reference proteome</keyword>
<keyword id="KW-0964">Secreted</keyword>
<keyword id="KW-0719">Serine esterase</keyword>
<keyword id="KW-0732">Signal</keyword>
<evidence type="ECO:0000250" key="1">
    <source>
        <dbReference type="UniProtKB" id="O53581"/>
    </source>
</evidence>
<evidence type="ECO:0000250" key="2">
    <source>
        <dbReference type="UniProtKB" id="P00590"/>
    </source>
</evidence>
<evidence type="ECO:0000250" key="3">
    <source>
        <dbReference type="UniProtKB" id="P9WP43"/>
    </source>
</evidence>
<evidence type="ECO:0000255" key="4"/>
<evidence type="ECO:0000256" key="5">
    <source>
        <dbReference type="SAM" id="MobiDB-lite"/>
    </source>
</evidence>
<evidence type="ECO:0000269" key="6">
    <source>
    </source>
</evidence>
<evidence type="ECO:0000303" key="7">
    <source>
    </source>
</evidence>
<evidence type="ECO:0000305" key="8"/>
<accession>P9WP39</accession>
<accession>L0TCK2</accession>
<accession>O06318</accession>
<accession>P0A536</accession>
<comment type="function">
    <text evidence="6">Shows weak esterase activity with the p-nitrophenol-linked aliphatic ester pNP-butyrate. Does not exhibit cutinase activity.</text>
</comment>
<comment type="subcellular location">
    <subcellularLocation>
        <location evidence="8">Secreted</location>
    </subcellularLocation>
</comment>
<comment type="similarity">
    <text evidence="8">Belongs to the cutinase family.</text>
</comment>
<organism>
    <name type="scientific">Mycobacterium tuberculosis (strain ATCC 25618 / H37Rv)</name>
    <dbReference type="NCBI Taxonomy" id="83332"/>
    <lineage>
        <taxon>Bacteria</taxon>
        <taxon>Bacillati</taxon>
        <taxon>Actinomycetota</taxon>
        <taxon>Actinomycetes</taxon>
        <taxon>Mycobacteriales</taxon>
        <taxon>Mycobacteriaceae</taxon>
        <taxon>Mycobacterium</taxon>
        <taxon>Mycobacterium tuberculosis complex</taxon>
    </lineage>
</organism>
<protein>
    <recommendedName>
        <fullName evidence="8">Probable carboxylesterase Culp3</fullName>
        <ecNumber evidence="3">3.1.1.-</ecNumber>
    </recommendedName>
    <alternativeName>
        <fullName evidence="7">Cutinase-like protein 3</fullName>
        <shortName evidence="7">Culp3</shortName>
    </alternativeName>
</protein>
<sequence length="262" mass="26504">MNNRPIRLLTSGRAGLGAGALITAVVLLIALGAVWTPVAFADGCPDAEVTFARGTGEPPGIGRVGQAFVDSLRQQTGMEIGVYPVNYAASRLQLHGGDGANDAISHIKSMASSCPNTKLVLGGYSQGATVIDIVAGVPLGSISFGSPLPAAYADNVAAVAVFGNPSNRAGGSLSSLSPLFGSKAIDLCNPTDPICHVGPGNEFSGHIDGYIPTYTTQAASFVVQRLRAGSVPHLPGSVPQLPGSVLQMPGTAAPAPESLHGR</sequence>
<dbReference type="EC" id="3.1.1.-" evidence="3"/>
<dbReference type="EMBL" id="AL123456">
    <property type="protein sequence ID" value="CCP46273.1"/>
    <property type="molecule type" value="Genomic_DNA"/>
</dbReference>
<dbReference type="PIR" id="H70564">
    <property type="entry name" value="H70564"/>
</dbReference>
<dbReference type="RefSeq" id="NP_217968.2">
    <property type="nucleotide sequence ID" value="NC_000962.3"/>
</dbReference>
<dbReference type="RefSeq" id="WP_003418336.1">
    <property type="nucleotide sequence ID" value="NZ_NVQJ01000065.1"/>
</dbReference>
<dbReference type="SMR" id="P9WP39"/>
<dbReference type="STRING" id="83332.Rv3451"/>
<dbReference type="ESTHER" id="myctu-cut3">
    <property type="family name" value="Cutinase"/>
</dbReference>
<dbReference type="PaxDb" id="83332-Rv3451"/>
<dbReference type="DNASU" id="887611"/>
<dbReference type="GeneID" id="887611"/>
<dbReference type="KEGG" id="mtu:Rv3451"/>
<dbReference type="KEGG" id="mtv:RVBD_3451"/>
<dbReference type="TubercuList" id="Rv3451"/>
<dbReference type="eggNOG" id="ENOG5030I1N">
    <property type="taxonomic scope" value="Bacteria"/>
</dbReference>
<dbReference type="InParanoid" id="P9WP39"/>
<dbReference type="OrthoDB" id="3690529at2"/>
<dbReference type="PhylomeDB" id="P9WP39"/>
<dbReference type="Proteomes" id="UP000001584">
    <property type="component" value="Chromosome"/>
</dbReference>
<dbReference type="GO" id="GO:0005576">
    <property type="term" value="C:extracellular region"/>
    <property type="evidence" value="ECO:0007669"/>
    <property type="project" value="UniProtKB-SubCell"/>
</dbReference>
<dbReference type="GO" id="GO:0106435">
    <property type="term" value="F:carboxylesterase activity"/>
    <property type="evidence" value="ECO:0000318"/>
    <property type="project" value="GO_Central"/>
</dbReference>
<dbReference type="GO" id="GO:0016298">
    <property type="term" value="F:lipase activity"/>
    <property type="evidence" value="ECO:0000318"/>
    <property type="project" value="GO_Central"/>
</dbReference>
<dbReference type="GO" id="GO:0016042">
    <property type="term" value="P:lipid catabolic process"/>
    <property type="evidence" value="ECO:0000318"/>
    <property type="project" value="GO_Central"/>
</dbReference>
<dbReference type="Gene3D" id="3.40.50.1820">
    <property type="entry name" value="alpha/beta hydrolase"/>
    <property type="match status" value="1"/>
</dbReference>
<dbReference type="InterPro" id="IPR029058">
    <property type="entry name" value="AB_hydrolase_fold"/>
</dbReference>
<dbReference type="InterPro" id="IPR000675">
    <property type="entry name" value="Cutinase/axe"/>
</dbReference>
<dbReference type="InterPro" id="IPR043580">
    <property type="entry name" value="CUTINASE_1"/>
</dbReference>
<dbReference type="PANTHER" id="PTHR33630:SF9">
    <property type="entry name" value="CUTINASE 4"/>
    <property type="match status" value="1"/>
</dbReference>
<dbReference type="PANTHER" id="PTHR33630">
    <property type="entry name" value="CUTINASE RV1984C-RELATED-RELATED"/>
    <property type="match status" value="1"/>
</dbReference>
<dbReference type="Pfam" id="PF01083">
    <property type="entry name" value="Cutinase"/>
    <property type="match status" value="1"/>
</dbReference>
<dbReference type="SMART" id="SM01110">
    <property type="entry name" value="Cutinase"/>
    <property type="match status" value="1"/>
</dbReference>
<dbReference type="SUPFAM" id="SSF53474">
    <property type="entry name" value="alpha/beta-Hydrolases"/>
    <property type="match status" value="1"/>
</dbReference>
<dbReference type="PROSITE" id="PS00155">
    <property type="entry name" value="CUTINASE_1"/>
    <property type="match status" value="1"/>
</dbReference>
<gene>
    <name type="primary">cut3</name>
    <name type="ordered locus">Rv3451</name>
    <name type="ORF">MTCY13E12.04</name>
</gene>
<feature type="signal peptide" evidence="4">
    <location>
        <begin position="1"/>
        <end position="41"/>
    </location>
</feature>
<feature type="chain" id="PRO_0000006451" description="Probable carboxylesterase Culp3">
    <location>
        <begin position="42"/>
        <end position="262"/>
    </location>
</feature>
<feature type="region of interest" description="Disordered" evidence="5">
    <location>
        <begin position="241"/>
        <end position="262"/>
    </location>
</feature>
<feature type="active site" description="Nucleophile" evidence="1">
    <location>
        <position position="125"/>
    </location>
</feature>
<feature type="active site" evidence="1">
    <location>
        <position position="192"/>
    </location>
</feature>
<feature type="active site" description="Proton donor/acceptor" evidence="1">
    <location>
        <position position="206"/>
    </location>
</feature>
<feature type="site" description="Transition state stabilizer" evidence="2">
    <location>
        <position position="126"/>
    </location>
</feature>
<feature type="disulfide bond" evidence="1">
    <location>
        <begin position="44"/>
        <end position="114"/>
    </location>
</feature>
<feature type="disulfide bond" evidence="1">
    <location>
        <begin position="188"/>
        <end position="195"/>
    </location>
</feature>